<keyword id="KW-0067">ATP-binding</keyword>
<keyword id="KW-0436">Ligase</keyword>
<keyword id="KW-0479">Metal-binding</keyword>
<keyword id="KW-0547">Nucleotide-binding</keyword>
<keyword id="KW-1185">Reference proteome</keyword>
<keyword id="KW-0862">Zinc</keyword>
<name>MSHC_MYCTA</name>
<proteinExistence type="inferred from homology"/>
<dbReference type="EC" id="6.3.1.13" evidence="1"/>
<dbReference type="EMBL" id="CP000611">
    <property type="protein sequence ID" value="ABQ73906.1"/>
    <property type="molecule type" value="Genomic_DNA"/>
</dbReference>
<dbReference type="RefSeq" id="WP_003411091.1">
    <property type="nucleotide sequence ID" value="NZ_CP016972.1"/>
</dbReference>
<dbReference type="SMR" id="A5U4F6"/>
<dbReference type="DrugBank" id="DB04209">
    <property type="generic name" value="Dequalinium"/>
</dbReference>
<dbReference type="KEGG" id="mra:MRA_2144"/>
<dbReference type="eggNOG" id="COG0215">
    <property type="taxonomic scope" value="Bacteria"/>
</dbReference>
<dbReference type="HOGENOM" id="CLU_013528_0_0_11"/>
<dbReference type="Proteomes" id="UP000001988">
    <property type="component" value="Chromosome"/>
</dbReference>
<dbReference type="GO" id="GO:0005829">
    <property type="term" value="C:cytosol"/>
    <property type="evidence" value="ECO:0007669"/>
    <property type="project" value="TreeGrafter"/>
</dbReference>
<dbReference type="GO" id="GO:0005524">
    <property type="term" value="F:ATP binding"/>
    <property type="evidence" value="ECO:0007669"/>
    <property type="project" value="UniProtKB-KW"/>
</dbReference>
<dbReference type="GO" id="GO:0035446">
    <property type="term" value="F:cysteine-glucosaminylinositol ligase activity"/>
    <property type="evidence" value="ECO:0007669"/>
    <property type="project" value="UniProtKB-UniRule"/>
</dbReference>
<dbReference type="GO" id="GO:0004817">
    <property type="term" value="F:cysteine-tRNA ligase activity"/>
    <property type="evidence" value="ECO:0007669"/>
    <property type="project" value="TreeGrafter"/>
</dbReference>
<dbReference type="GO" id="GO:0008270">
    <property type="term" value="F:zinc ion binding"/>
    <property type="evidence" value="ECO:0007669"/>
    <property type="project" value="UniProtKB-UniRule"/>
</dbReference>
<dbReference type="GO" id="GO:0006423">
    <property type="term" value="P:cysteinyl-tRNA aminoacylation"/>
    <property type="evidence" value="ECO:0007669"/>
    <property type="project" value="TreeGrafter"/>
</dbReference>
<dbReference type="GO" id="GO:0010125">
    <property type="term" value="P:mycothiol biosynthetic process"/>
    <property type="evidence" value="ECO:0007669"/>
    <property type="project" value="UniProtKB-UniRule"/>
</dbReference>
<dbReference type="CDD" id="cd07955">
    <property type="entry name" value="Anticodon_Ia_Cys_like"/>
    <property type="match status" value="1"/>
</dbReference>
<dbReference type="CDD" id="cd00672">
    <property type="entry name" value="CysRS_core"/>
    <property type="match status" value="1"/>
</dbReference>
<dbReference type="FunFam" id="1.20.120.640:FF:000001">
    <property type="entry name" value="L-cysteine:1D-myo-inositol 2-amino-2-deoxy-alpha-D-glucopyranoside ligase"/>
    <property type="match status" value="1"/>
</dbReference>
<dbReference type="FunFam" id="3.40.50.620:FF:000134">
    <property type="entry name" value="L-cysteine:1D-myo-inositol 2-amino-2-deoxy-alpha-D-glucopyranoside ligase"/>
    <property type="match status" value="1"/>
</dbReference>
<dbReference type="Gene3D" id="1.20.120.640">
    <property type="entry name" value="Anticodon-binding domain of a subclass of class I aminoacyl-tRNA synthetases"/>
    <property type="match status" value="1"/>
</dbReference>
<dbReference type="Gene3D" id="3.40.50.620">
    <property type="entry name" value="HUPs"/>
    <property type="match status" value="1"/>
</dbReference>
<dbReference type="HAMAP" id="MF_01697">
    <property type="entry name" value="MshC"/>
    <property type="match status" value="1"/>
</dbReference>
<dbReference type="InterPro" id="IPR024909">
    <property type="entry name" value="Cys-tRNA/MSH_ligase"/>
</dbReference>
<dbReference type="InterPro" id="IPR017812">
    <property type="entry name" value="Mycothiol_ligase_MshC"/>
</dbReference>
<dbReference type="InterPro" id="IPR014729">
    <property type="entry name" value="Rossmann-like_a/b/a_fold"/>
</dbReference>
<dbReference type="InterPro" id="IPR032678">
    <property type="entry name" value="tRNA-synt_1_cat_dom"/>
</dbReference>
<dbReference type="NCBIfam" id="TIGR03447">
    <property type="entry name" value="mycothiol_MshC"/>
    <property type="match status" value="1"/>
</dbReference>
<dbReference type="PANTHER" id="PTHR10890:SF3">
    <property type="entry name" value="CYSTEINE--TRNA LIGASE, CYTOPLASMIC"/>
    <property type="match status" value="1"/>
</dbReference>
<dbReference type="PANTHER" id="PTHR10890">
    <property type="entry name" value="CYSTEINYL-TRNA SYNTHETASE"/>
    <property type="match status" value="1"/>
</dbReference>
<dbReference type="Pfam" id="PF01406">
    <property type="entry name" value="tRNA-synt_1e"/>
    <property type="match status" value="1"/>
</dbReference>
<dbReference type="PRINTS" id="PR00983">
    <property type="entry name" value="TRNASYNTHCYS"/>
</dbReference>
<dbReference type="SUPFAM" id="SSF52374">
    <property type="entry name" value="Nucleotidylyl transferase"/>
    <property type="match status" value="1"/>
</dbReference>
<protein>
    <recommendedName>
        <fullName evidence="1">L-cysteine:1D-myo-inositol 2-amino-2-deoxy-alpha-D-glucopyranoside ligase</fullName>
        <shortName evidence="1">L-Cys:GlcN-Ins ligase</shortName>
        <ecNumber evidence="1">6.3.1.13</ecNumber>
    </recommendedName>
    <alternativeName>
        <fullName evidence="1">Mycothiol ligase</fullName>
        <shortName evidence="1">MSH ligase</shortName>
    </alternativeName>
</protein>
<sequence length="414" mass="45595">MQSWYCPPVPVLPGRGPQLRLYDSADRQVRPVAPGSKATMYVCGITPYDATHLGHAATYVTFDLIHRLWLDLGHELHYVQNITDIDDPLFERADRDGVDWRDLAQAEVALFCEDMAALRVLPPQDYVGATEAIAEMVELIEKMLACGAAYVIDREMGEYQDIYFRADATLQFGYESGYDRDTMLRLCEERGGDPRRPGKSDELDALLWRAARPGEPSWPSPFGPGRPGWHVECAAIALSRIGSGLDIQGGGSDLIFPHHEFTAAHAECVSGERRFARHYVHAGMIGWDGHKMSKSRGNLVLVSALRAQDVEPSAVRLGLLAGHYRADRFWSQQVLDEATARLHRWRTATALPAGPAAVDVVARVRRYLADDLDTPKAIAALDGWVTDAVEYGGHDAGAPKLVATAIDALLGVDL</sequence>
<evidence type="ECO:0000255" key="1">
    <source>
        <dbReference type="HAMAP-Rule" id="MF_01697"/>
    </source>
</evidence>
<accession>A5U4F6</accession>
<organism>
    <name type="scientific">Mycobacterium tuberculosis (strain ATCC 25177 / H37Ra)</name>
    <dbReference type="NCBI Taxonomy" id="419947"/>
    <lineage>
        <taxon>Bacteria</taxon>
        <taxon>Bacillati</taxon>
        <taxon>Actinomycetota</taxon>
        <taxon>Actinomycetes</taxon>
        <taxon>Mycobacteriales</taxon>
        <taxon>Mycobacteriaceae</taxon>
        <taxon>Mycobacterium</taxon>
        <taxon>Mycobacterium tuberculosis complex</taxon>
    </lineage>
</organism>
<reference key="1">
    <citation type="journal article" date="2008" name="PLoS ONE">
        <title>Genetic basis of virulence attenuation revealed by comparative genomic analysis of Mycobacterium tuberculosis strain H37Ra versus H37Rv.</title>
        <authorList>
            <person name="Zheng H."/>
            <person name="Lu L."/>
            <person name="Wang B."/>
            <person name="Pu S."/>
            <person name="Zhang X."/>
            <person name="Zhu G."/>
            <person name="Shi W."/>
            <person name="Zhang L."/>
            <person name="Wang H."/>
            <person name="Wang S."/>
            <person name="Zhao G."/>
            <person name="Zhang Y."/>
        </authorList>
    </citation>
    <scope>NUCLEOTIDE SEQUENCE [LARGE SCALE GENOMIC DNA]</scope>
    <source>
        <strain>ATCC 25177 / H37Ra</strain>
    </source>
</reference>
<gene>
    <name evidence="1" type="primary">mshC</name>
    <name type="ordered locus">MRA_2144</name>
</gene>
<comment type="function">
    <text evidence="1">Catalyzes the ATP-dependent condensation of GlcN-Ins and L-cysteine to form L-Cys-GlcN-Ins.</text>
</comment>
<comment type="catalytic activity">
    <reaction evidence="1">
        <text>1D-myo-inositol 2-amino-2-deoxy-alpha-D-glucopyranoside + L-cysteine + ATP = 1D-myo-inositol 2-(L-cysteinylamino)-2-deoxy-alpha-D-glucopyranoside + AMP + diphosphate + H(+)</text>
        <dbReference type="Rhea" id="RHEA:26176"/>
        <dbReference type="ChEBI" id="CHEBI:15378"/>
        <dbReference type="ChEBI" id="CHEBI:30616"/>
        <dbReference type="ChEBI" id="CHEBI:33019"/>
        <dbReference type="ChEBI" id="CHEBI:35235"/>
        <dbReference type="ChEBI" id="CHEBI:58886"/>
        <dbReference type="ChEBI" id="CHEBI:58887"/>
        <dbReference type="ChEBI" id="CHEBI:456215"/>
        <dbReference type="EC" id="6.3.1.13"/>
    </reaction>
</comment>
<comment type="cofactor">
    <cofactor evidence="1">
        <name>Zn(2+)</name>
        <dbReference type="ChEBI" id="CHEBI:29105"/>
    </cofactor>
    <text evidence="1">Binds 1 zinc ion per subunit.</text>
</comment>
<comment type="subunit">
    <text evidence="1">Monomer.</text>
</comment>
<comment type="similarity">
    <text evidence="1">Belongs to the class-I aminoacyl-tRNA synthetase family. MshC subfamily.</text>
</comment>
<feature type="chain" id="PRO_0000400466" description="L-cysteine:1D-myo-inositol 2-amino-2-deoxy-alpha-D-glucopyranoside ligase">
    <location>
        <begin position="1"/>
        <end position="414"/>
    </location>
</feature>
<feature type="short sequence motif" description="'HIGH' region" evidence="1">
    <location>
        <begin position="45"/>
        <end position="55"/>
    </location>
</feature>
<feature type="short sequence motif" description="'ERGGDP' region" evidence="1">
    <location>
        <begin position="189"/>
        <end position="194"/>
    </location>
</feature>
<feature type="short sequence motif" description="'KMSKS' region" evidence="1">
    <location>
        <begin position="291"/>
        <end position="295"/>
    </location>
</feature>
<feature type="binding site" evidence="1">
    <location>
        <begin position="43"/>
        <end position="46"/>
    </location>
    <ligand>
        <name>L-cysteinyl-5'-AMP</name>
        <dbReference type="ChEBI" id="CHEBI:144924"/>
    </ligand>
</feature>
<feature type="binding site" evidence="1">
    <location>
        <position position="43"/>
    </location>
    <ligand>
        <name>Zn(2+)</name>
        <dbReference type="ChEBI" id="CHEBI:29105"/>
    </ligand>
</feature>
<feature type="binding site" evidence="1">
    <location>
        <position position="58"/>
    </location>
    <ligand>
        <name>L-cysteinyl-5'-AMP</name>
        <dbReference type="ChEBI" id="CHEBI:144924"/>
    </ligand>
</feature>
<feature type="binding site" evidence="1">
    <location>
        <begin position="81"/>
        <end position="83"/>
    </location>
    <ligand>
        <name>L-cysteinyl-5'-AMP</name>
        <dbReference type="ChEBI" id="CHEBI:144924"/>
    </ligand>
</feature>
<feature type="binding site" evidence="1">
    <location>
        <position position="229"/>
    </location>
    <ligand>
        <name>L-cysteinyl-5'-AMP</name>
        <dbReference type="ChEBI" id="CHEBI:144924"/>
    </ligand>
</feature>
<feature type="binding site" evidence="1">
    <location>
        <position position="233"/>
    </location>
    <ligand>
        <name>Zn(2+)</name>
        <dbReference type="ChEBI" id="CHEBI:29105"/>
    </ligand>
</feature>
<feature type="binding site" evidence="1">
    <location>
        <begin position="251"/>
        <end position="253"/>
    </location>
    <ligand>
        <name>L-cysteinyl-5'-AMP</name>
        <dbReference type="ChEBI" id="CHEBI:144924"/>
    </ligand>
</feature>
<feature type="binding site" evidence="1">
    <location>
        <position position="258"/>
    </location>
    <ligand>
        <name>Zn(2+)</name>
        <dbReference type="ChEBI" id="CHEBI:29105"/>
    </ligand>
</feature>
<feature type="binding site" evidence="1">
    <location>
        <position position="285"/>
    </location>
    <ligand>
        <name>L-cysteinyl-5'-AMP</name>
        <dbReference type="ChEBI" id="CHEBI:144924"/>
    </ligand>
</feature>